<keyword id="KW-0997">Cell inner membrane</keyword>
<keyword id="KW-1003">Cell membrane</keyword>
<keyword id="KW-0169">Cobalamin biosynthesis</keyword>
<keyword id="KW-0460">Magnesium</keyword>
<keyword id="KW-0472">Membrane</keyword>
<keyword id="KW-0808">Transferase</keyword>
<keyword id="KW-0812">Transmembrane</keyword>
<keyword id="KW-1133">Transmembrane helix</keyword>
<organism>
    <name type="scientific">Salmonella newport (strain SL254)</name>
    <dbReference type="NCBI Taxonomy" id="423368"/>
    <lineage>
        <taxon>Bacteria</taxon>
        <taxon>Pseudomonadati</taxon>
        <taxon>Pseudomonadota</taxon>
        <taxon>Gammaproteobacteria</taxon>
        <taxon>Enterobacterales</taxon>
        <taxon>Enterobacteriaceae</taxon>
        <taxon>Salmonella</taxon>
    </lineage>
</organism>
<comment type="function">
    <text evidence="1">Joins adenosylcobinamide-GDP and alpha-ribazole to generate adenosylcobalamin (Ado-cobalamin). Also synthesizes adenosylcobalamin 5'-phosphate from adenosylcobinamide-GDP and alpha-ribazole 5'-phosphate.</text>
</comment>
<comment type="catalytic activity">
    <reaction evidence="1">
        <text>alpha-ribazole + adenosylcob(III)inamide-GDP = adenosylcob(III)alamin + GMP + H(+)</text>
        <dbReference type="Rhea" id="RHEA:16049"/>
        <dbReference type="ChEBI" id="CHEBI:10329"/>
        <dbReference type="ChEBI" id="CHEBI:15378"/>
        <dbReference type="ChEBI" id="CHEBI:18408"/>
        <dbReference type="ChEBI" id="CHEBI:58115"/>
        <dbReference type="ChEBI" id="CHEBI:60487"/>
        <dbReference type="EC" id="2.7.8.26"/>
    </reaction>
</comment>
<comment type="catalytic activity">
    <reaction evidence="1">
        <text>alpha-ribazole 5'-phosphate + adenosylcob(III)inamide-GDP = adenosylcob(III)alamin 5'-phosphate + GMP + H(+)</text>
        <dbReference type="Rhea" id="RHEA:23560"/>
        <dbReference type="ChEBI" id="CHEBI:15378"/>
        <dbReference type="ChEBI" id="CHEBI:57918"/>
        <dbReference type="ChEBI" id="CHEBI:58115"/>
        <dbReference type="ChEBI" id="CHEBI:60487"/>
        <dbReference type="ChEBI" id="CHEBI:60493"/>
        <dbReference type="EC" id="2.7.8.26"/>
    </reaction>
</comment>
<comment type="cofactor">
    <cofactor evidence="1">
        <name>Mg(2+)</name>
        <dbReference type="ChEBI" id="CHEBI:18420"/>
    </cofactor>
</comment>
<comment type="pathway">
    <text evidence="1">Cofactor biosynthesis; adenosylcobalamin biosynthesis; adenosylcobalamin from cob(II)yrinate a,c-diamide: step 7/7.</text>
</comment>
<comment type="subcellular location">
    <subcellularLocation>
        <location evidence="1">Cell inner membrane</location>
        <topology evidence="1">Multi-pass membrane protein</topology>
    </subcellularLocation>
</comment>
<comment type="similarity">
    <text evidence="1">Belongs to the CobS family.</text>
</comment>
<dbReference type="EC" id="2.7.8.26" evidence="1"/>
<dbReference type="EMBL" id="CP001113">
    <property type="protein sequence ID" value="ACF63140.1"/>
    <property type="molecule type" value="Genomic_DNA"/>
</dbReference>
<dbReference type="RefSeq" id="WP_000039993.1">
    <property type="nucleotide sequence ID" value="NZ_CCMR01000002.1"/>
</dbReference>
<dbReference type="KEGG" id="see:SNSL254_A2193"/>
<dbReference type="HOGENOM" id="CLU_057426_3_1_6"/>
<dbReference type="UniPathway" id="UPA00148">
    <property type="reaction ID" value="UER00238"/>
</dbReference>
<dbReference type="Proteomes" id="UP000008824">
    <property type="component" value="Chromosome"/>
</dbReference>
<dbReference type="GO" id="GO:0005886">
    <property type="term" value="C:plasma membrane"/>
    <property type="evidence" value="ECO:0007669"/>
    <property type="project" value="UniProtKB-SubCell"/>
</dbReference>
<dbReference type="GO" id="GO:0051073">
    <property type="term" value="F:adenosylcobinamide-GDP ribazoletransferase activity"/>
    <property type="evidence" value="ECO:0007669"/>
    <property type="project" value="UniProtKB-UniRule"/>
</dbReference>
<dbReference type="GO" id="GO:0008818">
    <property type="term" value="F:cobalamin 5'-phosphate synthase activity"/>
    <property type="evidence" value="ECO:0007669"/>
    <property type="project" value="UniProtKB-UniRule"/>
</dbReference>
<dbReference type="GO" id="GO:0009236">
    <property type="term" value="P:cobalamin biosynthetic process"/>
    <property type="evidence" value="ECO:0007669"/>
    <property type="project" value="UniProtKB-UniRule"/>
</dbReference>
<dbReference type="HAMAP" id="MF_00719">
    <property type="entry name" value="CobS"/>
    <property type="match status" value="1"/>
</dbReference>
<dbReference type="InterPro" id="IPR003805">
    <property type="entry name" value="CobS"/>
</dbReference>
<dbReference type="NCBIfam" id="TIGR00317">
    <property type="entry name" value="cobS"/>
    <property type="match status" value="1"/>
</dbReference>
<dbReference type="PANTHER" id="PTHR34148">
    <property type="entry name" value="ADENOSYLCOBINAMIDE-GDP RIBAZOLETRANSFERASE"/>
    <property type="match status" value="1"/>
</dbReference>
<dbReference type="PANTHER" id="PTHR34148:SF1">
    <property type="entry name" value="ADENOSYLCOBINAMIDE-GDP RIBAZOLETRANSFERASE"/>
    <property type="match status" value="1"/>
</dbReference>
<dbReference type="Pfam" id="PF02654">
    <property type="entry name" value="CobS"/>
    <property type="match status" value="1"/>
</dbReference>
<gene>
    <name evidence="1" type="primary">cobS</name>
    <name type="ordered locus">SNSL254_A2193</name>
</gene>
<feature type="chain" id="PRO_1000132600" description="Adenosylcobinamide-GDP ribazoletransferase">
    <location>
        <begin position="1"/>
        <end position="247"/>
    </location>
</feature>
<feature type="transmembrane region" description="Helical" evidence="1">
    <location>
        <begin position="34"/>
        <end position="54"/>
    </location>
</feature>
<feature type="transmembrane region" description="Helical" evidence="1">
    <location>
        <begin position="59"/>
        <end position="79"/>
    </location>
</feature>
<feature type="transmembrane region" description="Helical" evidence="1">
    <location>
        <begin position="113"/>
        <end position="133"/>
    </location>
</feature>
<feature type="transmembrane region" description="Helical" evidence="1">
    <location>
        <begin position="138"/>
        <end position="158"/>
    </location>
</feature>
<feature type="transmembrane region" description="Helical" evidence="1">
    <location>
        <begin position="171"/>
        <end position="193"/>
    </location>
</feature>
<feature type="transmembrane region" description="Helical" evidence="1">
    <location>
        <begin position="197"/>
        <end position="219"/>
    </location>
</feature>
<sequence length="247" mass="26344">MSKLFWAMLAFISRLPVPSRWSQGLDFEQYSRGIVMFPFIGLILGGVSGLIFILLQPWCGIPLAALFCILALALLTGGFHLDGLADTCDGIFSARRRERMLEIMRDSRLGTHGGLALIFVLLAKILVVSELALRGTPMLAALAAACAAGRGSAVLLMYRHRYAREEGLGNVFIGKVSGRQTCITLGLAIIIATVLLPGMQGLAAMVVTCAAIFILGQLLKRTLGGQTGDTLGAAIELGELIFLLALL</sequence>
<reference key="1">
    <citation type="journal article" date="2011" name="J. Bacteriol.">
        <title>Comparative genomics of 28 Salmonella enterica isolates: evidence for CRISPR-mediated adaptive sublineage evolution.</title>
        <authorList>
            <person name="Fricke W.F."/>
            <person name="Mammel M.K."/>
            <person name="McDermott P.F."/>
            <person name="Tartera C."/>
            <person name="White D.G."/>
            <person name="Leclerc J.E."/>
            <person name="Ravel J."/>
            <person name="Cebula T.A."/>
        </authorList>
    </citation>
    <scope>NUCLEOTIDE SEQUENCE [LARGE SCALE GENOMIC DNA]</scope>
    <source>
        <strain>SL254</strain>
    </source>
</reference>
<name>COBS_SALNS</name>
<evidence type="ECO:0000255" key="1">
    <source>
        <dbReference type="HAMAP-Rule" id="MF_00719"/>
    </source>
</evidence>
<accession>B4SWC6</accession>
<proteinExistence type="inferred from homology"/>
<protein>
    <recommendedName>
        <fullName evidence="1">Adenosylcobinamide-GDP ribazoletransferase</fullName>
        <ecNumber evidence="1">2.7.8.26</ecNumber>
    </recommendedName>
    <alternativeName>
        <fullName evidence="1">Cobalamin synthase</fullName>
    </alternativeName>
    <alternativeName>
        <fullName evidence="1">Cobalamin-5'-phosphate synthase</fullName>
    </alternativeName>
</protein>